<evidence type="ECO:0000250" key="1">
    <source>
        <dbReference type="UniProtKB" id="Q9H2K8"/>
    </source>
</evidence>
<evidence type="ECO:0000255" key="2"/>
<evidence type="ECO:0000255" key="3">
    <source>
        <dbReference type="PROSITE-ProRule" id="PRU00159"/>
    </source>
</evidence>
<evidence type="ECO:0000256" key="4">
    <source>
        <dbReference type="SAM" id="MobiDB-lite"/>
    </source>
</evidence>
<evidence type="ECO:0000269" key="5">
    <source>
    </source>
</evidence>
<evidence type="ECO:0000305" key="6"/>
<gene>
    <name type="primary">TAOK3</name>
    <name type="synonym">KFC</name>
    <name type="ORF">RCJMB04_21d18</name>
</gene>
<proteinExistence type="evidence at transcript level"/>
<organism>
    <name type="scientific">Gallus gallus</name>
    <name type="common">Chicken</name>
    <dbReference type="NCBI Taxonomy" id="9031"/>
    <lineage>
        <taxon>Eukaryota</taxon>
        <taxon>Metazoa</taxon>
        <taxon>Chordata</taxon>
        <taxon>Craniata</taxon>
        <taxon>Vertebrata</taxon>
        <taxon>Euteleostomi</taxon>
        <taxon>Archelosauria</taxon>
        <taxon>Archosauria</taxon>
        <taxon>Dinosauria</taxon>
        <taxon>Saurischia</taxon>
        <taxon>Theropoda</taxon>
        <taxon>Coelurosauria</taxon>
        <taxon>Aves</taxon>
        <taxon>Neognathae</taxon>
        <taxon>Galloanserae</taxon>
        <taxon>Galliformes</taxon>
        <taxon>Phasianidae</taxon>
        <taxon>Phasianinae</taxon>
        <taxon>Gallus</taxon>
    </lineage>
</organism>
<name>TAOK3_CHICK</name>
<keyword id="KW-0067">ATP-binding</keyword>
<keyword id="KW-1003">Cell membrane</keyword>
<keyword id="KW-0175">Coiled coil</keyword>
<keyword id="KW-0963">Cytoplasm</keyword>
<keyword id="KW-0227">DNA damage</keyword>
<keyword id="KW-0234">DNA repair</keyword>
<keyword id="KW-0418">Kinase</keyword>
<keyword id="KW-0551">Lipid droplet</keyword>
<keyword id="KW-0472">Membrane</keyword>
<keyword id="KW-0547">Nucleotide-binding</keyword>
<keyword id="KW-1185">Reference proteome</keyword>
<keyword id="KW-0723">Serine/threonine-protein kinase</keyword>
<keyword id="KW-0808">Transferase</keyword>
<comment type="function">
    <text evidence="1 5">Serine/threonine-protein kinase that acts as a regulator of the p38/MAPK14 stress-activated MAPK cascade and of the MAPK8/JNK cascade. In response to DNA damage, involved in the G2/M transition DNA damage checkpoint by activating the p38/MAPK14 stress-activated MAPK cascade, probably by mediating phosphorylation of upstream MAP kinase kinases. Inhibits basal activity of the MAPK8/JNK cascade (By similarity).</text>
</comment>
<comment type="catalytic activity">
    <reaction>
        <text>L-seryl-[protein] + ATP = O-phospho-L-seryl-[protein] + ADP + H(+)</text>
        <dbReference type="Rhea" id="RHEA:17989"/>
        <dbReference type="Rhea" id="RHEA-COMP:9863"/>
        <dbReference type="Rhea" id="RHEA-COMP:11604"/>
        <dbReference type="ChEBI" id="CHEBI:15378"/>
        <dbReference type="ChEBI" id="CHEBI:29999"/>
        <dbReference type="ChEBI" id="CHEBI:30616"/>
        <dbReference type="ChEBI" id="CHEBI:83421"/>
        <dbReference type="ChEBI" id="CHEBI:456216"/>
        <dbReference type="EC" id="2.7.11.1"/>
    </reaction>
</comment>
<comment type="catalytic activity">
    <reaction>
        <text>L-threonyl-[protein] + ATP = O-phospho-L-threonyl-[protein] + ADP + H(+)</text>
        <dbReference type="Rhea" id="RHEA:46608"/>
        <dbReference type="Rhea" id="RHEA-COMP:11060"/>
        <dbReference type="Rhea" id="RHEA-COMP:11605"/>
        <dbReference type="ChEBI" id="CHEBI:15378"/>
        <dbReference type="ChEBI" id="CHEBI:30013"/>
        <dbReference type="ChEBI" id="CHEBI:30616"/>
        <dbReference type="ChEBI" id="CHEBI:61977"/>
        <dbReference type="ChEBI" id="CHEBI:456216"/>
        <dbReference type="EC" id="2.7.11.1"/>
    </reaction>
</comment>
<comment type="subcellular location">
    <subcellularLocation>
        <location evidence="1">Cytoplasm</location>
    </subcellularLocation>
    <subcellularLocation>
        <location evidence="1">Cell membrane</location>
        <topology evidence="1">Peripheral membrane protein</topology>
    </subcellularLocation>
    <subcellularLocation>
        <location evidence="1">Membrane raft</location>
    </subcellularLocation>
    <subcellularLocation>
        <location evidence="1">Lipid droplet</location>
    </subcellularLocation>
</comment>
<comment type="similarity">
    <text evidence="6">Belongs to the protein kinase superfamily. STE Ser/Thr protein kinase family. STE20 subfamily.</text>
</comment>
<protein>
    <recommendedName>
        <fullName>Serine/threonine-protein kinase TAO3</fullName>
        <ecNumber>2.7.11.1</ecNumber>
    </recommendedName>
    <alternativeName>
        <fullName>Kinase from chicken</fullName>
    </alternativeName>
    <alternativeName>
        <fullName>Thousand and one amino acid protein 3</fullName>
    </alternativeName>
</protein>
<dbReference type="EC" id="2.7.11.1"/>
<dbReference type="EMBL" id="AF263314">
    <property type="protein sequence ID" value="AAF73045.1"/>
    <property type="molecule type" value="mRNA"/>
</dbReference>
<dbReference type="EMBL" id="AJ851723">
    <property type="protein sequence ID" value="CAH65357.1"/>
    <property type="molecule type" value="mRNA"/>
</dbReference>
<dbReference type="RefSeq" id="NP_001012541.1">
    <property type="nucleotide sequence ID" value="NM_001012523.1"/>
</dbReference>
<dbReference type="SMR" id="Q9I9E0"/>
<dbReference type="FunCoup" id="Q9I9E0">
    <property type="interactions" value="1689"/>
</dbReference>
<dbReference type="STRING" id="9031.ENSGALP00000069369"/>
<dbReference type="PaxDb" id="9031-ENSGALP00000011954"/>
<dbReference type="GeneID" id="395499"/>
<dbReference type="KEGG" id="gga:395499"/>
<dbReference type="CTD" id="51347"/>
<dbReference type="VEuPathDB" id="HostDB:geneid_395499"/>
<dbReference type="eggNOG" id="KOG0577">
    <property type="taxonomic scope" value="Eukaryota"/>
</dbReference>
<dbReference type="InParanoid" id="Q9I9E0"/>
<dbReference type="OrthoDB" id="10016527at2759"/>
<dbReference type="PhylomeDB" id="Q9I9E0"/>
<dbReference type="PRO" id="PR:Q9I9E0"/>
<dbReference type="Proteomes" id="UP000000539">
    <property type="component" value="Unassembled WGS sequence"/>
</dbReference>
<dbReference type="GO" id="GO:0005737">
    <property type="term" value="C:cytoplasm"/>
    <property type="evidence" value="ECO:0000318"/>
    <property type="project" value="GO_Central"/>
</dbReference>
<dbReference type="GO" id="GO:0005524">
    <property type="term" value="F:ATP binding"/>
    <property type="evidence" value="ECO:0007669"/>
    <property type="project" value="UniProtKB-KW"/>
</dbReference>
<dbReference type="GO" id="GO:0106310">
    <property type="term" value="F:protein serine kinase activity"/>
    <property type="evidence" value="ECO:0007669"/>
    <property type="project" value="RHEA"/>
</dbReference>
<dbReference type="GO" id="GO:0004674">
    <property type="term" value="F:protein serine/threonine kinase activity"/>
    <property type="evidence" value="ECO:0000250"/>
    <property type="project" value="AgBase"/>
</dbReference>
<dbReference type="GO" id="GO:0016740">
    <property type="term" value="F:transferase activity"/>
    <property type="evidence" value="ECO:0000250"/>
    <property type="project" value="AgBase"/>
</dbReference>
<dbReference type="GO" id="GO:0006974">
    <property type="term" value="P:DNA damage response"/>
    <property type="evidence" value="ECO:0000250"/>
    <property type="project" value="UniProtKB"/>
</dbReference>
<dbReference type="GO" id="GO:0006281">
    <property type="term" value="P:DNA repair"/>
    <property type="evidence" value="ECO:0007669"/>
    <property type="project" value="UniProtKB-KW"/>
</dbReference>
<dbReference type="GO" id="GO:0000165">
    <property type="term" value="P:MAPK cascade"/>
    <property type="evidence" value="ECO:0000250"/>
    <property type="project" value="AgBase"/>
</dbReference>
<dbReference type="GO" id="GO:0007095">
    <property type="term" value="P:mitotic G2 DNA damage checkpoint signaling"/>
    <property type="evidence" value="ECO:0000250"/>
    <property type="project" value="UniProtKB"/>
</dbReference>
<dbReference type="GO" id="GO:0046329">
    <property type="term" value="P:negative regulation of JNK cascade"/>
    <property type="evidence" value="ECO:0000250"/>
    <property type="project" value="AgBase"/>
</dbReference>
<dbReference type="GO" id="GO:0048812">
    <property type="term" value="P:neuron projection morphogenesis"/>
    <property type="evidence" value="ECO:0000318"/>
    <property type="project" value="GO_Central"/>
</dbReference>
<dbReference type="GO" id="GO:0046330">
    <property type="term" value="P:positive regulation of JNK cascade"/>
    <property type="evidence" value="ECO:0000250"/>
    <property type="project" value="AgBase"/>
</dbReference>
<dbReference type="GO" id="GO:0032874">
    <property type="term" value="P:positive regulation of stress-activated MAPK cascade"/>
    <property type="evidence" value="ECO:0000250"/>
    <property type="project" value="UniProtKB"/>
</dbReference>
<dbReference type="GO" id="GO:0043408">
    <property type="term" value="P:regulation of MAPK cascade"/>
    <property type="evidence" value="ECO:0000318"/>
    <property type="project" value="GO_Central"/>
</dbReference>
<dbReference type="CDD" id="cd06633">
    <property type="entry name" value="STKc_TAO3"/>
    <property type="match status" value="1"/>
</dbReference>
<dbReference type="FunFam" id="1.10.510.10:FF:000030">
    <property type="entry name" value="Serine/threonine-protein kinase TAO2, putative"/>
    <property type="match status" value="1"/>
</dbReference>
<dbReference type="FunFam" id="3.30.200.20:FF:000029">
    <property type="entry name" value="Serine/threonine-protein kinase TAO2, putative"/>
    <property type="match status" value="1"/>
</dbReference>
<dbReference type="Gene3D" id="3.30.200.20">
    <property type="entry name" value="Phosphorylase Kinase, domain 1"/>
    <property type="match status" value="1"/>
</dbReference>
<dbReference type="Gene3D" id="1.10.510.10">
    <property type="entry name" value="Transferase(Phosphotransferase) domain 1"/>
    <property type="match status" value="1"/>
</dbReference>
<dbReference type="InterPro" id="IPR011009">
    <property type="entry name" value="Kinase-like_dom_sf"/>
</dbReference>
<dbReference type="InterPro" id="IPR000719">
    <property type="entry name" value="Prot_kinase_dom"/>
</dbReference>
<dbReference type="InterPro" id="IPR017441">
    <property type="entry name" value="Protein_kinase_ATP_BS"/>
</dbReference>
<dbReference type="InterPro" id="IPR051234">
    <property type="entry name" value="TAO_STE20_kinase"/>
</dbReference>
<dbReference type="PANTHER" id="PTHR47167">
    <property type="entry name" value="SERINE/THREONINE-PROTEIN KINASE TAO1-LIKE PROTEIN"/>
    <property type="match status" value="1"/>
</dbReference>
<dbReference type="PANTHER" id="PTHR47167:SF10">
    <property type="entry name" value="SERINE_THREONINE-PROTEIN KINASE TAO3"/>
    <property type="match status" value="1"/>
</dbReference>
<dbReference type="Pfam" id="PF00069">
    <property type="entry name" value="Pkinase"/>
    <property type="match status" value="1"/>
</dbReference>
<dbReference type="SMART" id="SM00220">
    <property type="entry name" value="S_TKc"/>
    <property type="match status" value="1"/>
</dbReference>
<dbReference type="SUPFAM" id="SSF56112">
    <property type="entry name" value="Protein kinase-like (PK-like)"/>
    <property type="match status" value="1"/>
</dbReference>
<dbReference type="PROSITE" id="PS00107">
    <property type="entry name" value="PROTEIN_KINASE_ATP"/>
    <property type="match status" value="1"/>
</dbReference>
<dbReference type="PROSITE" id="PS50011">
    <property type="entry name" value="PROTEIN_KINASE_DOM"/>
    <property type="match status" value="1"/>
</dbReference>
<feature type="chain" id="PRO_0000086741" description="Serine/threonine-protein kinase TAO3">
    <location>
        <begin position="1"/>
        <end position="898"/>
    </location>
</feature>
<feature type="domain" description="Protein kinase" evidence="3">
    <location>
        <begin position="24"/>
        <end position="277"/>
    </location>
</feature>
<feature type="region of interest" description="Disordered" evidence="4">
    <location>
        <begin position="316"/>
        <end position="374"/>
    </location>
</feature>
<feature type="region of interest" description="Disordered" evidence="4">
    <location>
        <begin position="565"/>
        <end position="596"/>
    </location>
</feature>
<feature type="coiled-coil region" evidence="2">
    <location>
        <begin position="452"/>
        <end position="502"/>
    </location>
</feature>
<feature type="coiled-coil region" evidence="2">
    <location>
        <begin position="548"/>
        <end position="649"/>
    </location>
</feature>
<feature type="coiled-coil region" evidence="2">
    <location>
        <begin position="754"/>
        <end position="875"/>
    </location>
</feature>
<feature type="compositionally biased region" description="Polar residues" evidence="4">
    <location>
        <begin position="334"/>
        <end position="351"/>
    </location>
</feature>
<feature type="compositionally biased region" description="Low complexity" evidence="4">
    <location>
        <begin position="352"/>
        <end position="368"/>
    </location>
</feature>
<feature type="active site" description="Proton acceptor" evidence="3">
    <location>
        <position position="147"/>
    </location>
</feature>
<feature type="binding site" evidence="3">
    <location>
        <begin position="30"/>
        <end position="38"/>
    </location>
    <ligand>
        <name>ATP</name>
        <dbReference type="ChEBI" id="CHEBI:30616"/>
    </ligand>
</feature>
<feature type="binding site" evidence="3">
    <location>
        <position position="53"/>
    </location>
    <ligand>
        <name>ATP</name>
        <dbReference type="ChEBI" id="CHEBI:30616"/>
    </ligand>
</feature>
<feature type="sequence conflict" description="In Ref. 1; AAF73045." evidence="6" ref="1">
    <original>M</original>
    <variation>L</variation>
    <location>
        <position position="111"/>
    </location>
</feature>
<feature type="sequence conflict" description="In Ref. 1; AAF73045." evidence="6" ref="1">
    <original>ERK</original>
    <variation>QRP</variation>
    <location>
        <begin position="216"/>
        <end position="218"/>
    </location>
</feature>
<feature type="sequence conflict" description="In Ref. 1; AAF73045." evidence="6" ref="1">
    <original>T</original>
    <variation>A</variation>
    <location>
        <position position="387"/>
    </location>
</feature>
<feature type="sequence conflict" description="In Ref. 1; AAF73045." evidence="6" ref="1">
    <original>M</original>
    <variation>L</variation>
    <location>
        <position position="545"/>
    </location>
</feature>
<feature type="sequence conflict" description="In Ref. 1; AAF73045." evidence="6" ref="1">
    <original>L</original>
    <variation>V</variation>
    <location>
        <position position="742"/>
    </location>
</feature>
<feature type="sequence conflict" description="In Ref. 1; AAF73045." evidence="6" ref="1">
    <original>R</original>
    <variation>L</variation>
    <location>
        <position position="787"/>
    </location>
</feature>
<feature type="sequence conflict" description="In Ref. 1; AAF73045." evidence="6" ref="1">
    <original>A</original>
    <variation>G</variation>
    <location>
        <position position="811"/>
    </location>
</feature>
<sequence>MRKGVPKDPEIADLFYKDDPEEIFVGLHEIGHGSFGAVYFATNSHTNEVVAVKKMSYSGKQTNEKWQDIIKEVKFLQQLKHPNTIEYKGCYLKEHTAWLVMEYCLGSASDMLEVHKKPLQEVEIAAITHGALQGLAYLHSHCKIHRDIKAGNILLTEPGQVKLADFGSASIVSPANSFVGTPYWMAPEVILAMDEGQYDGKVDVWSLGITCIELAERKPPLFNMNAMSALYHIAQNDSPTLQSNEWSDSFRGFVDYCLQKIPQERPSSADLLRHDFVRRDRPPRVLIDLIQRTKDAVRELDNLQYRKMKKILFQETRNGPLTESQEEEEDSEHGSNLSRKMDSLGSNHSIPSMSVSTGSQSSSVSSMQEVLDESSPELVMMHSDESTVNSTSSVVQKKDHVFIRDEVGHRDRRPEVRPTQSVQNQALHYRNRERFATIKSASLVTRQIHEHEQENELREQMSGYKRMRRQHQKQLIALENKLKAEMDEHRLKLQKEVETHANNSSIELEKLAKKQVAVMEKEAKTAAADEKKFQQQILAQQKKDMATFLESQKKQYKLCKEKIKEEMNEDHSTPKKEKQERISKHKENLQHTQAEEEAHLLSQQRLYYDKNCRFFKRKTMIKRHELEQQNIREELNKKRTQKEMEHAMLIRHDESTRELEYRQLHTLQKLRMDLIRLQHQTELENQLEYNKRRERELHRKHFMELRQQPKNLKAMEMQIKKQFQDTCKVQTKQYKALKNHQLEVTPKSEHKTILKSLKDEQTRKLAILAEQYEQSINEMMASQALRRDEAQEAECQALRLQLQQEMELLNAYQSKIKMQTEAQHERELQKLEQRVSLRRAHLEQKIEEELAALQKERSERIKFLLERQEREIETFDMESLRMGFGNLVTLDYPKEDYR</sequence>
<reference key="1">
    <citation type="journal article" date="2000" name="Oncogene">
        <title>KFC, a Ste20-like kinase with mitogenic potential and capability to activate the SAPK/JNK pathway.</title>
        <authorList>
            <person name="Yustein J.T."/>
            <person name="Li D."/>
            <person name="Robinson D."/>
            <person name="Kung H.-J."/>
        </authorList>
    </citation>
    <scope>NUCLEOTIDE SEQUENCE [MRNA]</scope>
    <scope>FUNCTION</scope>
    <source>
        <tissue>Fibroblast</tissue>
    </source>
</reference>
<reference key="2">
    <citation type="journal article" date="2005" name="Genome Biol.">
        <title>Full-length cDNAs from chicken bursal lymphocytes to facilitate gene function analysis.</title>
        <authorList>
            <person name="Caldwell R.B."/>
            <person name="Kierzek A.M."/>
            <person name="Arakawa H."/>
            <person name="Bezzubov Y."/>
            <person name="Zaim J."/>
            <person name="Fiedler P."/>
            <person name="Kutter S."/>
            <person name="Blagodatski A."/>
            <person name="Kostovska D."/>
            <person name="Koter M."/>
            <person name="Plachy J."/>
            <person name="Carninci P."/>
            <person name="Hayashizaki Y."/>
            <person name="Buerstedde J.-M."/>
        </authorList>
    </citation>
    <scope>NUCLEOTIDE SEQUENCE [LARGE SCALE MRNA]</scope>
    <source>
        <strain>CB</strain>
        <tissue>Bursa of Fabricius</tissue>
    </source>
</reference>
<accession>Q9I9E0</accession>
<accession>Q5F3C7</accession>